<evidence type="ECO:0000255" key="1">
    <source>
        <dbReference type="HAMAP-Rule" id="MF_00184"/>
    </source>
</evidence>
<evidence type="ECO:0000255" key="2">
    <source>
        <dbReference type="PROSITE-ProRule" id="PRU01228"/>
    </source>
</evidence>
<proteinExistence type="inferred from homology"/>
<accession>Q8XZ29</accession>
<organism>
    <name type="scientific">Ralstonia nicotianae (strain ATCC BAA-1114 / GMI1000)</name>
    <name type="common">Ralstonia solanacearum</name>
    <dbReference type="NCBI Taxonomy" id="267608"/>
    <lineage>
        <taxon>Bacteria</taxon>
        <taxon>Pseudomonadati</taxon>
        <taxon>Pseudomonadota</taxon>
        <taxon>Betaproteobacteria</taxon>
        <taxon>Burkholderiales</taxon>
        <taxon>Burkholderiaceae</taxon>
        <taxon>Ralstonia</taxon>
        <taxon>Ralstonia solanacearum species complex</taxon>
    </lineage>
</organism>
<reference key="1">
    <citation type="journal article" date="2002" name="Nature">
        <title>Genome sequence of the plant pathogen Ralstonia solanacearum.</title>
        <authorList>
            <person name="Salanoubat M."/>
            <person name="Genin S."/>
            <person name="Artiguenave F."/>
            <person name="Gouzy J."/>
            <person name="Mangenot S."/>
            <person name="Arlat M."/>
            <person name="Billault A."/>
            <person name="Brottier P."/>
            <person name="Camus J.-C."/>
            <person name="Cattolico L."/>
            <person name="Chandler M."/>
            <person name="Choisne N."/>
            <person name="Claudel-Renard C."/>
            <person name="Cunnac S."/>
            <person name="Demange N."/>
            <person name="Gaspin C."/>
            <person name="Lavie M."/>
            <person name="Moisan A."/>
            <person name="Robert C."/>
            <person name="Saurin W."/>
            <person name="Schiex T."/>
            <person name="Siguier P."/>
            <person name="Thebault P."/>
            <person name="Whalen M."/>
            <person name="Wincker P."/>
            <person name="Levy M."/>
            <person name="Weissenbach J."/>
            <person name="Boucher C.A."/>
        </authorList>
    </citation>
    <scope>NUCLEOTIDE SEQUENCE [LARGE SCALE GENOMIC DNA]</scope>
    <source>
        <strain>ATCC BAA-1114 / GMI1000</strain>
    </source>
</reference>
<comment type="function">
    <text evidence="1">Catalyzes the attachment of threonine to tRNA(Thr) in a two-step reaction: L-threonine is first activated by ATP to form Thr-AMP and then transferred to the acceptor end of tRNA(Thr). Also edits incorrectly charged L-seryl-tRNA(Thr).</text>
</comment>
<comment type="catalytic activity">
    <reaction evidence="1">
        <text>tRNA(Thr) + L-threonine + ATP = L-threonyl-tRNA(Thr) + AMP + diphosphate + H(+)</text>
        <dbReference type="Rhea" id="RHEA:24624"/>
        <dbReference type="Rhea" id="RHEA-COMP:9670"/>
        <dbReference type="Rhea" id="RHEA-COMP:9704"/>
        <dbReference type="ChEBI" id="CHEBI:15378"/>
        <dbReference type="ChEBI" id="CHEBI:30616"/>
        <dbReference type="ChEBI" id="CHEBI:33019"/>
        <dbReference type="ChEBI" id="CHEBI:57926"/>
        <dbReference type="ChEBI" id="CHEBI:78442"/>
        <dbReference type="ChEBI" id="CHEBI:78534"/>
        <dbReference type="ChEBI" id="CHEBI:456215"/>
        <dbReference type="EC" id="6.1.1.3"/>
    </reaction>
</comment>
<comment type="cofactor">
    <cofactor evidence="1">
        <name>Zn(2+)</name>
        <dbReference type="ChEBI" id="CHEBI:29105"/>
    </cofactor>
    <text evidence="1">Binds 1 zinc ion per subunit.</text>
</comment>
<comment type="subunit">
    <text evidence="1">Homodimer.</text>
</comment>
<comment type="subcellular location">
    <subcellularLocation>
        <location evidence="1">Cytoplasm</location>
    </subcellularLocation>
</comment>
<comment type="similarity">
    <text evidence="1">Belongs to the class-II aminoacyl-tRNA synthetase family.</text>
</comment>
<feature type="chain" id="PRO_0000101031" description="Threonine--tRNA ligase">
    <location>
        <begin position="1"/>
        <end position="635"/>
    </location>
</feature>
<feature type="domain" description="TGS" evidence="2">
    <location>
        <begin position="1"/>
        <end position="61"/>
    </location>
</feature>
<feature type="region of interest" description="Catalytic" evidence="1">
    <location>
        <begin position="242"/>
        <end position="533"/>
    </location>
</feature>
<feature type="binding site" evidence="1">
    <location>
        <position position="333"/>
    </location>
    <ligand>
        <name>Zn(2+)</name>
        <dbReference type="ChEBI" id="CHEBI:29105"/>
    </ligand>
</feature>
<feature type="binding site" evidence="1">
    <location>
        <position position="384"/>
    </location>
    <ligand>
        <name>Zn(2+)</name>
        <dbReference type="ChEBI" id="CHEBI:29105"/>
    </ligand>
</feature>
<feature type="binding site" evidence="1">
    <location>
        <position position="510"/>
    </location>
    <ligand>
        <name>Zn(2+)</name>
        <dbReference type="ChEBI" id="CHEBI:29105"/>
    </ligand>
</feature>
<protein>
    <recommendedName>
        <fullName evidence="1">Threonine--tRNA ligase</fullName>
        <ecNumber evidence="1">6.1.1.3</ecNumber>
    </recommendedName>
    <alternativeName>
        <fullName evidence="1">Threonyl-tRNA synthetase</fullName>
        <shortName evidence="1">ThrRS</shortName>
    </alternativeName>
</protein>
<name>SYT_RALN1</name>
<gene>
    <name evidence="1" type="primary">thrS</name>
    <name type="ordered locus">RSc1577</name>
    <name type="ORF">RS05795</name>
</gene>
<keyword id="KW-0030">Aminoacyl-tRNA synthetase</keyword>
<keyword id="KW-0067">ATP-binding</keyword>
<keyword id="KW-0963">Cytoplasm</keyword>
<keyword id="KW-0436">Ligase</keyword>
<keyword id="KW-0479">Metal-binding</keyword>
<keyword id="KW-0547">Nucleotide-binding</keyword>
<keyword id="KW-0648">Protein biosynthesis</keyword>
<keyword id="KW-1185">Reference proteome</keyword>
<keyword id="KW-0694">RNA-binding</keyword>
<keyword id="KW-0820">tRNA-binding</keyword>
<keyword id="KW-0862">Zinc</keyword>
<dbReference type="EC" id="6.1.1.3" evidence="1"/>
<dbReference type="EMBL" id="AL646052">
    <property type="protein sequence ID" value="CAD15279.1"/>
    <property type="molecule type" value="Genomic_DNA"/>
</dbReference>
<dbReference type="RefSeq" id="WP_011001520.1">
    <property type="nucleotide sequence ID" value="NC_003295.1"/>
</dbReference>
<dbReference type="SMR" id="Q8XZ29"/>
<dbReference type="STRING" id="267608.RSc1577"/>
<dbReference type="EnsemblBacteria" id="CAD15279">
    <property type="protein sequence ID" value="CAD15279"/>
    <property type="gene ID" value="RSc1577"/>
</dbReference>
<dbReference type="KEGG" id="rso:RSc1577"/>
<dbReference type="eggNOG" id="COG0441">
    <property type="taxonomic scope" value="Bacteria"/>
</dbReference>
<dbReference type="HOGENOM" id="CLU_008554_0_1_4"/>
<dbReference type="Proteomes" id="UP000001436">
    <property type="component" value="Chromosome"/>
</dbReference>
<dbReference type="GO" id="GO:0005829">
    <property type="term" value="C:cytosol"/>
    <property type="evidence" value="ECO:0007669"/>
    <property type="project" value="TreeGrafter"/>
</dbReference>
<dbReference type="GO" id="GO:0005524">
    <property type="term" value="F:ATP binding"/>
    <property type="evidence" value="ECO:0007669"/>
    <property type="project" value="UniProtKB-UniRule"/>
</dbReference>
<dbReference type="GO" id="GO:0046872">
    <property type="term" value="F:metal ion binding"/>
    <property type="evidence" value="ECO:0007669"/>
    <property type="project" value="UniProtKB-KW"/>
</dbReference>
<dbReference type="GO" id="GO:0004829">
    <property type="term" value="F:threonine-tRNA ligase activity"/>
    <property type="evidence" value="ECO:0007669"/>
    <property type="project" value="UniProtKB-UniRule"/>
</dbReference>
<dbReference type="GO" id="GO:0000049">
    <property type="term" value="F:tRNA binding"/>
    <property type="evidence" value="ECO:0007669"/>
    <property type="project" value="UniProtKB-KW"/>
</dbReference>
<dbReference type="GO" id="GO:0006435">
    <property type="term" value="P:threonyl-tRNA aminoacylation"/>
    <property type="evidence" value="ECO:0007669"/>
    <property type="project" value="UniProtKB-UniRule"/>
</dbReference>
<dbReference type="CDD" id="cd01667">
    <property type="entry name" value="TGS_ThrRS"/>
    <property type="match status" value="1"/>
</dbReference>
<dbReference type="CDD" id="cd00860">
    <property type="entry name" value="ThrRS_anticodon"/>
    <property type="match status" value="1"/>
</dbReference>
<dbReference type="CDD" id="cd00771">
    <property type="entry name" value="ThrRS_core"/>
    <property type="match status" value="1"/>
</dbReference>
<dbReference type="FunFam" id="3.10.20.30:FF:000005">
    <property type="entry name" value="Threonine--tRNA ligase"/>
    <property type="match status" value="1"/>
</dbReference>
<dbReference type="FunFam" id="3.30.54.20:FF:000002">
    <property type="entry name" value="Threonine--tRNA ligase"/>
    <property type="match status" value="1"/>
</dbReference>
<dbReference type="FunFam" id="3.30.930.10:FF:000002">
    <property type="entry name" value="Threonine--tRNA ligase"/>
    <property type="match status" value="1"/>
</dbReference>
<dbReference type="FunFam" id="3.40.50.800:FF:000001">
    <property type="entry name" value="Threonine--tRNA ligase"/>
    <property type="match status" value="1"/>
</dbReference>
<dbReference type="FunFam" id="3.30.980.10:FF:000005">
    <property type="entry name" value="Threonyl-tRNA synthetase, mitochondrial"/>
    <property type="match status" value="1"/>
</dbReference>
<dbReference type="Gene3D" id="3.10.20.30">
    <property type="match status" value="1"/>
</dbReference>
<dbReference type="Gene3D" id="3.30.54.20">
    <property type="match status" value="1"/>
</dbReference>
<dbReference type="Gene3D" id="3.40.50.800">
    <property type="entry name" value="Anticodon-binding domain"/>
    <property type="match status" value="1"/>
</dbReference>
<dbReference type="Gene3D" id="3.30.930.10">
    <property type="entry name" value="Bira Bifunctional Protein, Domain 2"/>
    <property type="match status" value="1"/>
</dbReference>
<dbReference type="Gene3D" id="3.30.980.10">
    <property type="entry name" value="Threonyl-trna Synthetase, Chain A, domain 2"/>
    <property type="match status" value="1"/>
</dbReference>
<dbReference type="HAMAP" id="MF_00184">
    <property type="entry name" value="Thr_tRNA_synth"/>
    <property type="match status" value="1"/>
</dbReference>
<dbReference type="InterPro" id="IPR002314">
    <property type="entry name" value="aa-tRNA-synt_IIb"/>
</dbReference>
<dbReference type="InterPro" id="IPR006195">
    <property type="entry name" value="aa-tRNA-synth_II"/>
</dbReference>
<dbReference type="InterPro" id="IPR045864">
    <property type="entry name" value="aa-tRNA-synth_II/BPL/LPL"/>
</dbReference>
<dbReference type="InterPro" id="IPR004154">
    <property type="entry name" value="Anticodon-bd"/>
</dbReference>
<dbReference type="InterPro" id="IPR036621">
    <property type="entry name" value="Anticodon-bd_dom_sf"/>
</dbReference>
<dbReference type="InterPro" id="IPR012675">
    <property type="entry name" value="Beta-grasp_dom_sf"/>
</dbReference>
<dbReference type="InterPro" id="IPR004095">
    <property type="entry name" value="TGS"/>
</dbReference>
<dbReference type="InterPro" id="IPR012676">
    <property type="entry name" value="TGS-like"/>
</dbReference>
<dbReference type="InterPro" id="IPR002320">
    <property type="entry name" value="Thr-tRNA-ligase_IIa"/>
</dbReference>
<dbReference type="InterPro" id="IPR018163">
    <property type="entry name" value="Thr/Ala-tRNA-synth_IIc_edit"/>
</dbReference>
<dbReference type="InterPro" id="IPR047246">
    <property type="entry name" value="ThrRS_anticodon"/>
</dbReference>
<dbReference type="InterPro" id="IPR033728">
    <property type="entry name" value="ThrRS_core"/>
</dbReference>
<dbReference type="InterPro" id="IPR012947">
    <property type="entry name" value="tRNA_SAD"/>
</dbReference>
<dbReference type="NCBIfam" id="TIGR00418">
    <property type="entry name" value="thrS"/>
    <property type="match status" value="1"/>
</dbReference>
<dbReference type="PANTHER" id="PTHR11451:SF44">
    <property type="entry name" value="THREONINE--TRNA LIGASE, CHLOROPLASTIC_MITOCHONDRIAL 2"/>
    <property type="match status" value="1"/>
</dbReference>
<dbReference type="PANTHER" id="PTHR11451">
    <property type="entry name" value="THREONINE-TRNA LIGASE"/>
    <property type="match status" value="1"/>
</dbReference>
<dbReference type="Pfam" id="PF03129">
    <property type="entry name" value="HGTP_anticodon"/>
    <property type="match status" value="1"/>
</dbReference>
<dbReference type="Pfam" id="PF02824">
    <property type="entry name" value="TGS"/>
    <property type="match status" value="1"/>
</dbReference>
<dbReference type="Pfam" id="PF00587">
    <property type="entry name" value="tRNA-synt_2b"/>
    <property type="match status" value="1"/>
</dbReference>
<dbReference type="Pfam" id="PF07973">
    <property type="entry name" value="tRNA_SAD"/>
    <property type="match status" value="1"/>
</dbReference>
<dbReference type="PRINTS" id="PR01047">
    <property type="entry name" value="TRNASYNTHTHR"/>
</dbReference>
<dbReference type="SMART" id="SM00863">
    <property type="entry name" value="tRNA_SAD"/>
    <property type="match status" value="1"/>
</dbReference>
<dbReference type="SUPFAM" id="SSF52954">
    <property type="entry name" value="Class II aaRS ABD-related"/>
    <property type="match status" value="1"/>
</dbReference>
<dbReference type="SUPFAM" id="SSF55681">
    <property type="entry name" value="Class II aaRS and biotin synthetases"/>
    <property type="match status" value="1"/>
</dbReference>
<dbReference type="SUPFAM" id="SSF81271">
    <property type="entry name" value="TGS-like"/>
    <property type="match status" value="1"/>
</dbReference>
<dbReference type="SUPFAM" id="SSF55186">
    <property type="entry name" value="ThrRS/AlaRS common domain"/>
    <property type="match status" value="1"/>
</dbReference>
<dbReference type="PROSITE" id="PS50862">
    <property type="entry name" value="AA_TRNA_LIGASE_II"/>
    <property type="match status" value="1"/>
</dbReference>
<dbReference type="PROSITE" id="PS51880">
    <property type="entry name" value="TGS"/>
    <property type="match status" value="1"/>
</dbReference>
<sequence>MIAITLPDGSRREFPGPVTVAEVAQSIGAGLAKAALAGRIDGQLVDTSFRIEQNVDLAIVTDKDTDGLDVIRHSTAHLLAYAVKELYPEAQVTIGPVIENGFYYDFAYKRPFTPEDLVAIEKRMAELAKKDEKVTREVWSRDDAVKLFEGMGEKYKAEIIASIPEDQEIGLYREGNFVDLCRGPHVPSTGKLKVFKLMKVAGAYWRGDSNNEMLQRIYGTAWAKKEDQEAYLHMLEEAEKRDHRKLGKLLDLFHLQEEAPGMVFWHPKGWQIWQAVEQYMRGRLAGAGYSEVRTPQVMDRGLWERSGHWENYKENMFVTESEKREYAIKPMNCPGHVQIFNHGLRSYRDLPLRLAEFGACHRNEPSGALHGLMRVRGFVQDDAHIFCTEGQIMAEAKDFNDLAFSIYEDFGFENVAVKLALRPDKRAGTDEIWDHAEEGLRTALRACGVEWEELPGEGAFYGPKVEYHIKDAIGRSWQCGTLQLDLVLPERLGAEYVAEDNSRKRPVMLHRAILGSFERFLGILLENHAGALPLWLAPEQVVIMSIADAHAEYAESVAQSLQKQGFRASADLRNEKITYKIREHSLQKVPYLVVVGDKERDGNQVAVRARGNVDLGSMPVSTFVERLQNDFANKS</sequence>